<sequence length="174" mass="18332">MTLILGIDPGSRITGFGVVQQTPRGCVYVASGCIRTGAGELAERLQIVYRGVREVIQTYGPVTMGIEKVFMAKNADSALKLGQARGAAIVAGAEEGMEIAEYTATQVKQAVVGTGAANKEQVQMMVMHMLKLTSKPQIDASDALAIAICHAHTRSSLLPHGLGAARSRGGRLRL</sequence>
<feature type="chain" id="PRO_1000202039" description="Crossover junction endodeoxyribonuclease RuvC">
    <location>
        <begin position="1"/>
        <end position="174"/>
    </location>
</feature>
<feature type="active site" evidence="1">
    <location>
        <position position="8"/>
    </location>
</feature>
<feature type="active site" evidence="1">
    <location>
        <position position="67"/>
    </location>
</feature>
<feature type="active site" evidence="1">
    <location>
        <position position="139"/>
    </location>
</feature>
<feature type="binding site" evidence="1">
    <location>
        <position position="8"/>
    </location>
    <ligand>
        <name>Mg(2+)</name>
        <dbReference type="ChEBI" id="CHEBI:18420"/>
        <label>1</label>
    </ligand>
</feature>
<feature type="binding site" evidence="1">
    <location>
        <position position="67"/>
    </location>
    <ligand>
        <name>Mg(2+)</name>
        <dbReference type="ChEBI" id="CHEBI:18420"/>
        <label>2</label>
    </ligand>
</feature>
<feature type="binding site" evidence="1">
    <location>
        <position position="139"/>
    </location>
    <ligand>
        <name>Mg(2+)</name>
        <dbReference type="ChEBI" id="CHEBI:18420"/>
        <label>1</label>
    </ligand>
</feature>
<proteinExistence type="inferred from homology"/>
<keyword id="KW-0963">Cytoplasm</keyword>
<keyword id="KW-0227">DNA damage</keyword>
<keyword id="KW-0233">DNA recombination</keyword>
<keyword id="KW-0234">DNA repair</keyword>
<keyword id="KW-0238">DNA-binding</keyword>
<keyword id="KW-0255">Endonuclease</keyword>
<keyword id="KW-0378">Hydrolase</keyword>
<keyword id="KW-0460">Magnesium</keyword>
<keyword id="KW-0479">Metal-binding</keyword>
<keyword id="KW-0540">Nuclease</keyword>
<dbReference type="EC" id="3.1.21.10" evidence="1"/>
<dbReference type="EMBL" id="AM181176">
    <property type="protein sequence ID" value="CAY51823.1"/>
    <property type="molecule type" value="Genomic_DNA"/>
</dbReference>
<dbReference type="RefSeq" id="WP_015885612.1">
    <property type="nucleotide sequence ID" value="NC_012660.1"/>
</dbReference>
<dbReference type="SMR" id="C3JYS9"/>
<dbReference type="STRING" id="294.SRM1_04346"/>
<dbReference type="GeneID" id="93466529"/>
<dbReference type="eggNOG" id="COG0817">
    <property type="taxonomic scope" value="Bacteria"/>
</dbReference>
<dbReference type="HOGENOM" id="CLU_091257_2_1_6"/>
<dbReference type="OrthoDB" id="9805499at2"/>
<dbReference type="GO" id="GO:0005737">
    <property type="term" value="C:cytoplasm"/>
    <property type="evidence" value="ECO:0007669"/>
    <property type="project" value="UniProtKB-SubCell"/>
</dbReference>
<dbReference type="GO" id="GO:0048476">
    <property type="term" value="C:Holliday junction resolvase complex"/>
    <property type="evidence" value="ECO:0007669"/>
    <property type="project" value="UniProtKB-UniRule"/>
</dbReference>
<dbReference type="GO" id="GO:0008821">
    <property type="term" value="F:crossover junction DNA endonuclease activity"/>
    <property type="evidence" value="ECO:0007669"/>
    <property type="project" value="UniProtKB-UniRule"/>
</dbReference>
<dbReference type="GO" id="GO:0003677">
    <property type="term" value="F:DNA binding"/>
    <property type="evidence" value="ECO:0007669"/>
    <property type="project" value="UniProtKB-KW"/>
</dbReference>
<dbReference type="GO" id="GO:0000287">
    <property type="term" value="F:magnesium ion binding"/>
    <property type="evidence" value="ECO:0007669"/>
    <property type="project" value="UniProtKB-UniRule"/>
</dbReference>
<dbReference type="GO" id="GO:0006310">
    <property type="term" value="P:DNA recombination"/>
    <property type="evidence" value="ECO:0007669"/>
    <property type="project" value="UniProtKB-UniRule"/>
</dbReference>
<dbReference type="GO" id="GO:0006281">
    <property type="term" value="P:DNA repair"/>
    <property type="evidence" value="ECO:0007669"/>
    <property type="project" value="UniProtKB-UniRule"/>
</dbReference>
<dbReference type="CDD" id="cd16962">
    <property type="entry name" value="RuvC"/>
    <property type="match status" value="1"/>
</dbReference>
<dbReference type="FunFam" id="3.30.420.10:FF:000002">
    <property type="entry name" value="Crossover junction endodeoxyribonuclease RuvC"/>
    <property type="match status" value="1"/>
</dbReference>
<dbReference type="Gene3D" id="3.30.420.10">
    <property type="entry name" value="Ribonuclease H-like superfamily/Ribonuclease H"/>
    <property type="match status" value="1"/>
</dbReference>
<dbReference type="HAMAP" id="MF_00034">
    <property type="entry name" value="RuvC"/>
    <property type="match status" value="1"/>
</dbReference>
<dbReference type="InterPro" id="IPR012337">
    <property type="entry name" value="RNaseH-like_sf"/>
</dbReference>
<dbReference type="InterPro" id="IPR036397">
    <property type="entry name" value="RNaseH_sf"/>
</dbReference>
<dbReference type="InterPro" id="IPR020563">
    <property type="entry name" value="X-over_junc_endoDNase_Mg_BS"/>
</dbReference>
<dbReference type="InterPro" id="IPR002176">
    <property type="entry name" value="X-over_junc_endoDNase_RuvC"/>
</dbReference>
<dbReference type="NCBIfam" id="TIGR00228">
    <property type="entry name" value="ruvC"/>
    <property type="match status" value="1"/>
</dbReference>
<dbReference type="PANTHER" id="PTHR30194">
    <property type="entry name" value="CROSSOVER JUNCTION ENDODEOXYRIBONUCLEASE RUVC"/>
    <property type="match status" value="1"/>
</dbReference>
<dbReference type="PANTHER" id="PTHR30194:SF3">
    <property type="entry name" value="CROSSOVER JUNCTION ENDODEOXYRIBONUCLEASE RUVC"/>
    <property type="match status" value="1"/>
</dbReference>
<dbReference type="Pfam" id="PF02075">
    <property type="entry name" value="RuvC"/>
    <property type="match status" value="1"/>
</dbReference>
<dbReference type="PRINTS" id="PR00696">
    <property type="entry name" value="RSOLVASERUVC"/>
</dbReference>
<dbReference type="SUPFAM" id="SSF53098">
    <property type="entry name" value="Ribonuclease H-like"/>
    <property type="match status" value="1"/>
</dbReference>
<dbReference type="PROSITE" id="PS01321">
    <property type="entry name" value="RUVC"/>
    <property type="match status" value="1"/>
</dbReference>
<gene>
    <name evidence="1" type="primary">ruvC</name>
    <name type="ordered locus">PFLU_4915</name>
</gene>
<accession>C3JYS9</accession>
<comment type="function">
    <text evidence="1">The RuvA-RuvB-RuvC complex processes Holliday junction (HJ) DNA during genetic recombination and DNA repair. Endonuclease that resolves HJ intermediates. Cleaves cruciform DNA by making single-stranded nicks across the HJ at symmetrical positions within the homologous arms, yielding a 5'-phosphate and a 3'-hydroxyl group; requires a central core of homology in the junction. The consensus cleavage sequence is 5'-(A/T)TT(C/G)-3'. Cleavage occurs on the 3'-side of the TT dinucleotide at the point of strand exchange. HJ branch migration catalyzed by RuvA-RuvB allows RuvC to scan DNA until it finds its consensus sequence, where it cleaves and resolves the cruciform DNA.</text>
</comment>
<comment type="catalytic activity">
    <reaction evidence="1">
        <text>Endonucleolytic cleavage at a junction such as a reciprocal single-stranded crossover between two homologous DNA duplexes (Holliday junction).</text>
        <dbReference type="EC" id="3.1.21.10"/>
    </reaction>
</comment>
<comment type="cofactor">
    <cofactor evidence="1">
        <name>Mg(2+)</name>
        <dbReference type="ChEBI" id="CHEBI:18420"/>
    </cofactor>
    <text evidence="1">Binds 2 Mg(2+) ion per subunit.</text>
</comment>
<comment type="subunit">
    <text evidence="1">Homodimer which binds Holliday junction (HJ) DNA. The HJ becomes 2-fold symmetrical on binding to RuvC with unstacked arms; it has a different conformation from HJ DNA in complex with RuvA. In the full resolvosome a probable DNA-RuvA(4)-RuvB(12)-RuvC(2) complex forms which resolves the HJ.</text>
</comment>
<comment type="subcellular location">
    <subcellularLocation>
        <location evidence="1">Cytoplasm</location>
    </subcellularLocation>
</comment>
<comment type="similarity">
    <text evidence="1">Belongs to the RuvC family.</text>
</comment>
<evidence type="ECO:0000255" key="1">
    <source>
        <dbReference type="HAMAP-Rule" id="MF_00034"/>
    </source>
</evidence>
<protein>
    <recommendedName>
        <fullName evidence="1">Crossover junction endodeoxyribonuclease RuvC</fullName>
        <ecNumber evidence="1">3.1.21.10</ecNumber>
    </recommendedName>
    <alternativeName>
        <fullName evidence="1">Holliday junction nuclease RuvC</fullName>
    </alternativeName>
    <alternativeName>
        <fullName evidence="1">Holliday junction resolvase RuvC</fullName>
    </alternativeName>
</protein>
<reference key="1">
    <citation type="journal article" date="2009" name="Genome Biol.">
        <title>Genomic and genetic analyses of diversity and plant interactions of Pseudomonas fluorescens.</title>
        <authorList>
            <person name="Silby M.W."/>
            <person name="Cerdeno-Tarraga A.M."/>
            <person name="Vernikos G.S."/>
            <person name="Giddens S.R."/>
            <person name="Jackson R.W."/>
            <person name="Preston G.M."/>
            <person name="Zhang X.-X."/>
            <person name="Moon C.D."/>
            <person name="Gehrig S.M."/>
            <person name="Godfrey S.A.C."/>
            <person name="Knight C.G."/>
            <person name="Malone J.G."/>
            <person name="Robinson Z."/>
            <person name="Spiers A.J."/>
            <person name="Harris S."/>
            <person name="Challis G.L."/>
            <person name="Yaxley A.M."/>
            <person name="Harris D."/>
            <person name="Seeger K."/>
            <person name="Murphy L."/>
            <person name="Rutter S."/>
            <person name="Squares R."/>
            <person name="Quail M.A."/>
            <person name="Saunders E."/>
            <person name="Mavromatis K."/>
            <person name="Brettin T.S."/>
            <person name="Bentley S.D."/>
            <person name="Hothersall J."/>
            <person name="Stephens E."/>
            <person name="Thomas C.M."/>
            <person name="Parkhill J."/>
            <person name="Levy S.B."/>
            <person name="Rainey P.B."/>
            <person name="Thomson N.R."/>
        </authorList>
    </citation>
    <scope>NUCLEOTIDE SEQUENCE [LARGE SCALE GENOMIC DNA]</scope>
    <source>
        <strain>SBW25</strain>
    </source>
</reference>
<name>RUVC_PSEFS</name>
<organism>
    <name type="scientific">Pseudomonas fluorescens (strain SBW25)</name>
    <dbReference type="NCBI Taxonomy" id="216595"/>
    <lineage>
        <taxon>Bacteria</taxon>
        <taxon>Pseudomonadati</taxon>
        <taxon>Pseudomonadota</taxon>
        <taxon>Gammaproteobacteria</taxon>
        <taxon>Pseudomonadales</taxon>
        <taxon>Pseudomonadaceae</taxon>
        <taxon>Pseudomonas</taxon>
    </lineage>
</organism>